<organism>
    <name type="scientific">Candida albicans (strain SC5314 / ATCC MYA-2876)</name>
    <name type="common">Yeast</name>
    <dbReference type="NCBI Taxonomy" id="237561"/>
    <lineage>
        <taxon>Eukaryota</taxon>
        <taxon>Fungi</taxon>
        <taxon>Dikarya</taxon>
        <taxon>Ascomycota</taxon>
        <taxon>Saccharomycotina</taxon>
        <taxon>Pichiomycetes</taxon>
        <taxon>Debaryomycetaceae</taxon>
        <taxon>Candida/Lodderomyces clade</taxon>
        <taxon>Candida</taxon>
    </lineage>
</organism>
<keyword id="KW-0134">Cell wall</keyword>
<keyword id="KW-0961">Cell wall biogenesis/degradation</keyword>
<keyword id="KW-1015">Disulfide bond</keyword>
<keyword id="KW-0325">Glycoprotein</keyword>
<keyword id="KW-0326">Glycosidase</keyword>
<keyword id="KW-0328">Glycosyltransferase</keyword>
<keyword id="KW-0336">GPI-anchor</keyword>
<keyword id="KW-0378">Hydrolase</keyword>
<keyword id="KW-0449">Lipoprotein</keyword>
<keyword id="KW-0472">Membrane</keyword>
<keyword id="KW-1185">Reference proteome</keyword>
<keyword id="KW-0964">Secreted</keyword>
<keyword id="KW-0732">Signal</keyword>
<keyword id="KW-0808">Transferase</keyword>
<keyword id="KW-0843">Virulence</keyword>
<feature type="signal peptide" evidence="3">
    <location>
        <begin position="1"/>
        <end position="18"/>
    </location>
</feature>
<feature type="chain" id="PRO_0000424861" description="Crh-like protein CRH12">
    <location>
        <begin position="19"/>
        <end position="479"/>
    </location>
</feature>
<feature type="propeptide" id="PRO_0000424862" description="Removed in mature form" evidence="3">
    <location>
        <begin position="480"/>
        <end position="504"/>
    </location>
</feature>
<feature type="domain" description="GH16" evidence="4">
    <location>
        <begin position="19"/>
        <end position="270"/>
    </location>
</feature>
<feature type="region of interest" description="Disordered" evidence="5">
    <location>
        <begin position="304"/>
        <end position="404"/>
    </location>
</feature>
<feature type="compositionally biased region" description="Polar residues" evidence="5">
    <location>
        <begin position="316"/>
        <end position="329"/>
    </location>
</feature>
<feature type="compositionally biased region" description="Acidic residues" evidence="5">
    <location>
        <begin position="356"/>
        <end position="378"/>
    </location>
</feature>
<feature type="active site" description="Nucleophile" evidence="1">
    <location>
        <position position="138"/>
    </location>
</feature>
<feature type="active site" description="Proton donor" evidence="1">
    <location>
        <position position="143"/>
    </location>
</feature>
<feature type="binding site" evidence="2">
    <location>
        <position position="143"/>
    </location>
    <ligand>
        <name>chitin</name>
        <dbReference type="ChEBI" id="CHEBI:17029"/>
    </ligand>
</feature>
<feature type="binding site" evidence="2">
    <location>
        <position position="221"/>
    </location>
    <ligand>
        <name>chitin</name>
        <dbReference type="ChEBI" id="CHEBI:17029"/>
    </ligand>
</feature>
<feature type="binding site" evidence="2">
    <location>
        <position position="225"/>
    </location>
    <ligand>
        <name>chitin</name>
        <dbReference type="ChEBI" id="CHEBI:17029"/>
    </ligand>
</feature>
<feature type="binding site" evidence="2">
    <location>
        <position position="234"/>
    </location>
    <ligand>
        <name>chitin</name>
        <dbReference type="ChEBI" id="CHEBI:17029"/>
    </ligand>
</feature>
<feature type="lipid moiety-binding region" description="GPI-anchor amidated glycine" evidence="3">
    <location>
        <position position="479"/>
    </location>
</feature>
<feature type="glycosylation site" description="N-linked (GlcNAc...) asparagine" evidence="3">
    <location>
        <position position="34"/>
    </location>
</feature>
<feature type="glycosylation site" description="N-linked (GlcNAc...) asparagine" evidence="3">
    <location>
        <position position="161"/>
    </location>
</feature>
<feature type="glycosylation site" description="N-linked (GlcNAc...) asparagine" evidence="3">
    <location>
        <position position="407"/>
    </location>
</feature>
<feature type="glycosylation site" description="N-linked (GlcNAc...) asparagine" evidence="3">
    <location>
        <position position="416"/>
    </location>
</feature>
<feature type="glycosylation site" description="N-linked (GlcNAc...) asparagine" evidence="3">
    <location>
        <position position="425"/>
    </location>
</feature>
<feature type="disulfide bond" evidence="2">
    <location>
        <begin position="43"/>
        <end position="51"/>
    </location>
</feature>
<name>CRH12_CANAL</name>
<comment type="function">
    <text evidence="2 10">Dual chitinase/transglycosylase that plays a role in cell wall architecture (PubMed:17074760). Chitinase and transglycosylase activities are coupled (By similarity). Required for the polysaccharide cross-linking at the septa and the cell wall (By similarity). More specifically, transfers chitin to 1,6-beta-glucan in the cell wall (By similarity). Plays an important role in fungal pathogenesis via its functions in cell wall assembly and regeneration, filamentation, and adherence to host cells (PubMed:17074760).</text>
</comment>
<comment type="catalytic activity">
    <reaction evidence="2">
        <text>Random endo-hydrolysis of N-acetyl-beta-D-glucosaminide (1-&gt;4)-beta-linkages in chitin and chitodextrins.</text>
        <dbReference type="EC" id="3.2.1.14"/>
    </reaction>
</comment>
<comment type="subcellular location">
    <subcellularLocation>
        <location evidence="9">Secreted</location>
        <location evidence="9">Cell wall</location>
    </subcellularLocation>
    <subcellularLocation>
        <location evidence="3">Membrane</location>
        <topology evidence="3">Lipid-anchor</topology>
        <topology evidence="3">GPI-anchor</topology>
    </subcellularLocation>
    <text evidence="3">Covalently-linked GPI-modified cell wall protein (GPI-CWP).</text>
</comment>
<comment type="induction">
    <text evidence="6 7 8 9">Unlike CRH11, CRH12 is down-regulated during cell wall regeneration. Also regulated by NRG1, TUP1, and RIM101.</text>
</comment>
<comment type="PTM">
    <text evidence="12">The GPI-anchor is attached to the protein in the endoplasmic reticulum and serves to target the protein to the cell surface. There, the glucosamine-inositol phospholipid moiety is cleaved off and the GPI-modified mannoprotein is covalently attached via its lipidless GPI glycan remnant to the 1,6-beta-glucan of the outer cell wall layer.</text>
</comment>
<comment type="disruption phenotype">
    <text evidence="10">Leads to increased susceptibility to cell wall-perturbing agents.</text>
</comment>
<comment type="similarity">
    <text evidence="12">Belongs to the glycosyl hydrolase 16 family. CRH1 subfamily.</text>
</comment>
<evidence type="ECO:0000250" key="1">
    <source>
        <dbReference type="UniProtKB" id="P27051"/>
    </source>
</evidence>
<evidence type="ECO:0000250" key="2">
    <source>
        <dbReference type="UniProtKB" id="Q8J0P4"/>
    </source>
</evidence>
<evidence type="ECO:0000255" key="3"/>
<evidence type="ECO:0000255" key="4">
    <source>
        <dbReference type="PROSITE-ProRule" id="PRU01098"/>
    </source>
</evidence>
<evidence type="ECO:0000256" key="5">
    <source>
        <dbReference type="SAM" id="MobiDB-lite"/>
    </source>
</evidence>
<evidence type="ECO:0000269" key="6">
    <source>
    </source>
</evidence>
<evidence type="ECO:0000269" key="7">
    <source>
    </source>
</evidence>
<evidence type="ECO:0000269" key="8">
    <source>
    </source>
</evidence>
<evidence type="ECO:0000269" key="9">
    <source>
    </source>
</evidence>
<evidence type="ECO:0000269" key="10">
    <source>
    </source>
</evidence>
<evidence type="ECO:0000303" key="11">
    <source>
    </source>
</evidence>
<evidence type="ECO:0000305" key="12"/>
<dbReference type="EC" id="3.2.1.14" evidence="2"/>
<dbReference type="EC" id="2.4.-.-" evidence="2"/>
<dbReference type="EMBL" id="CP017627">
    <property type="protein sequence ID" value="AOW29885.1"/>
    <property type="molecule type" value="Genomic_DNA"/>
</dbReference>
<dbReference type="RefSeq" id="XP_721875.1">
    <property type="nucleotide sequence ID" value="XM_716782.2"/>
</dbReference>
<dbReference type="SMR" id="Q5AK54"/>
<dbReference type="STRING" id="237561.Q5AK54"/>
<dbReference type="CAZy" id="GH16">
    <property type="family name" value="Glycoside Hydrolase Family 16"/>
</dbReference>
<dbReference type="GlyCosmos" id="Q5AK54">
    <property type="glycosylation" value="5 sites, No reported glycans"/>
</dbReference>
<dbReference type="EnsemblFungi" id="C5_04800W_A-T">
    <property type="protein sequence ID" value="C5_04800W_A-T-p1"/>
    <property type="gene ID" value="C5_04800W_A"/>
</dbReference>
<dbReference type="GeneID" id="3636447"/>
<dbReference type="KEGG" id="cal:CAALFM_C504800WA"/>
<dbReference type="CGD" id="CAL0000195515">
    <property type="gene designation" value="CRH12"/>
</dbReference>
<dbReference type="VEuPathDB" id="FungiDB:C5_04800W_A"/>
<dbReference type="eggNOG" id="ENOG502QQ71">
    <property type="taxonomic scope" value="Eukaryota"/>
</dbReference>
<dbReference type="HOGENOM" id="CLU_027506_2_1_1"/>
<dbReference type="InParanoid" id="Q5AK54"/>
<dbReference type="OMA" id="GRYHEMH"/>
<dbReference type="OrthoDB" id="4781at2759"/>
<dbReference type="PRO" id="PR:Q5AK54"/>
<dbReference type="Proteomes" id="UP000000559">
    <property type="component" value="Chromosome 5"/>
</dbReference>
<dbReference type="GO" id="GO:0005576">
    <property type="term" value="C:extracellular region"/>
    <property type="evidence" value="ECO:0007669"/>
    <property type="project" value="UniProtKB-KW"/>
</dbReference>
<dbReference type="GO" id="GO:0009277">
    <property type="term" value="C:fungal-type cell wall"/>
    <property type="evidence" value="ECO:0000318"/>
    <property type="project" value="GO_Central"/>
</dbReference>
<dbReference type="GO" id="GO:0098552">
    <property type="term" value="C:side of membrane"/>
    <property type="evidence" value="ECO:0007669"/>
    <property type="project" value="UniProtKB-KW"/>
</dbReference>
<dbReference type="GO" id="GO:0016757">
    <property type="term" value="F:glycosyltransferase activity"/>
    <property type="evidence" value="ECO:0000318"/>
    <property type="project" value="GO_Central"/>
</dbReference>
<dbReference type="GO" id="GO:0004553">
    <property type="term" value="F:hydrolase activity, hydrolyzing O-glycosyl compounds"/>
    <property type="evidence" value="ECO:0007669"/>
    <property type="project" value="InterPro"/>
</dbReference>
<dbReference type="GO" id="GO:0005975">
    <property type="term" value="P:carbohydrate metabolic process"/>
    <property type="evidence" value="ECO:0007669"/>
    <property type="project" value="InterPro"/>
</dbReference>
<dbReference type="GO" id="GO:0006030">
    <property type="term" value="P:chitin metabolic process"/>
    <property type="evidence" value="ECO:0000318"/>
    <property type="project" value="GO_Central"/>
</dbReference>
<dbReference type="GO" id="GO:0031505">
    <property type="term" value="P:fungal-type cell wall organization"/>
    <property type="evidence" value="ECO:0000315"/>
    <property type="project" value="CGD"/>
</dbReference>
<dbReference type="CDD" id="cd02183">
    <property type="entry name" value="GH16_fungal_CRH1_transglycosylase"/>
    <property type="match status" value="1"/>
</dbReference>
<dbReference type="FunFam" id="2.60.120.200:FF:000432">
    <property type="entry name" value="Glycosidase"/>
    <property type="match status" value="1"/>
</dbReference>
<dbReference type="Gene3D" id="2.60.120.200">
    <property type="match status" value="1"/>
</dbReference>
<dbReference type="InterPro" id="IPR013320">
    <property type="entry name" value="ConA-like_dom_sf"/>
</dbReference>
<dbReference type="InterPro" id="IPR000757">
    <property type="entry name" value="GH16"/>
</dbReference>
<dbReference type="InterPro" id="IPR017168">
    <property type="entry name" value="Glyco_hydro_16_CRH1_prd"/>
</dbReference>
<dbReference type="InterPro" id="IPR050546">
    <property type="entry name" value="Glycosyl_Hydrlase_16"/>
</dbReference>
<dbReference type="PANTHER" id="PTHR10963:SF68">
    <property type="entry name" value="GLYCOSIDASE CRH1-RELATED"/>
    <property type="match status" value="1"/>
</dbReference>
<dbReference type="PANTHER" id="PTHR10963">
    <property type="entry name" value="GLYCOSYL HYDROLASE-RELATED"/>
    <property type="match status" value="1"/>
</dbReference>
<dbReference type="Pfam" id="PF00722">
    <property type="entry name" value="Glyco_hydro_16"/>
    <property type="match status" value="1"/>
</dbReference>
<dbReference type="PIRSF" id="PIRSF037299">
    <property type="entry name" value="Glycosidase_CRH1_prd"/>
    <property type="match status" value="1"/>
</dbReference>
<dbReference type="SUPFAM" id="SSF49899">
    <property type="entry name" value="Concanavalin A-like lectins/glucanases"/>
    <property type="match status" value="1"/>
</dbReference>
<dbReference type="PROSITE" id="PS51762">
    <property type="entry name" value="GH16_2"/>
    <property type="match status" value="1"/>
</dbReference>
<proteinExistence type="evidence at protein level"/>
<sequence>MYKQILTFLILFLRYILSEFPDDPYEDDDTSDDNNSDYEGQKCNPYRDKACLVNDEALGKKIFESFAEGTKYFTITSSTRGVRFGSEGLALTIQDEFDNPALVSSFYIMYGKVEAEIKGAAGKGIISSFYLQSDDLDEIDVVEIFGSDPYEFQTNFFIKGNTTTYDRGRYHEMHPSPLSEFHKYGIEWSPDLITWYLDDKPVRMLGRRNKHGLPCSPMFLKFSLWSVEDDDEGTIAWAGGAASFSEGPFTMHIKNLKVQDYSKALTYSYGNLRDGNWLDLRADGGYLYEGHKYCLPPKMLDKLKPTPKQETDDDQVLTSSKSQRVATTISEDKNTVSYYPPSATNSHTTWDRLSEWETEQDETGTDDTENSDNEEEESITAIPISKSRKGSTRRLDISTQLPPLSQNESKIAEIKNITTTKHIHNTTTSLQISKIKSKKVGVTTTIYSSSTPQSTSKSRMPYNIFFNYPGKENSRFKSGVSSILATSFSSVVIAEILVIVVLLL</sequence>
<accession>Q5AK54</accession>
<accession>A0A1D8PP35</accession>
<gene>
    <name type="primary">CRH12</name>
    <name type="synonym">CRH1</name>
    <name type="synonym">CRH2</name>
    <name type="ordered locus">CAALFM_C504800WA</name>
    <name type="ORF">CaO19.11448</name>
    <name type="ORF">CaO19.3966</name>
</gene>
<protein>
    <recommendedName>
        <fullName evidence="11">Crh-like protein CRH12</fullName>
    </recommendedName>
    <alternativeName>
        <fullName evidence="11">Congo red hypersensitive protein 12</fullName>
    </alternativeName>
    <domain>
        <recommendedName>
            <fullName evidence="2">Chitinase CRH12</fullName>
            <ecNumber evidence="2">3.2.1.14</ecNumber>
        </recommendedName>
    </domain>
    <domain>
        <recommendedName>
            <fullName evidence="2">Chitin transglycosylase CRH12</fullName>
            <ecNumber evidence="2">2.4.-.-</ecNumber>
        </recommendedName>
    </domain>
</protein>
<reference key="1">
    <citation type="journal article" date="2004" name="Proc. Natl. Acad. Sci. U.S.A.">
        <title>The diploid genome sequence of Candida albicans.</title>
        <authorList>
            <person name="Jones T."/>
            <person name="Federspiel N.A."/>
            <person name="Chibana H."/>
            <person name="Dungan J."/>
            <person name="Kalman S."/>
            <person name="Magee B.B."/>
            <person name="Newport G."/>
            <person name="Thorstenson Y.R."/>
            <person name="Agabian N."/>
            <person name="Magee P.T."/>
            <person name="Davis R.W."/>
            <person name="Scherer S."/>
        </authorList>
    </citation>
    <scope>NUCLEOTIDE SEQUENCE [LARGE SCALE GENOMIC DNA]</scope>
    <source>
        <strain>SC5314 / ATCC MYA-2876</strain>
    </source>
</reference>
<reference key="2">
    <citation type="journal article" date="2007" name="Genome Biol.">
        <title>Assembly of the Candida albicans genome into sixteen supercontigs aligned on the eight chromosomes.</title>
        <authorList>
            <person name="van het Hoog M."/>
            <person name="Rast T.J."/>
            <person name="Martchenko M."/>
            <person name="Grindle S."/>
            <person name="Dignard D."/>
            <person name="Hogues H."/>
            <person name="Cuomo C."/>
            <person name="Berriman M."/>
            <person name="Scherer S."/>
            <person name="Magee B.B."/>
            <person name="Whiteway M."/>
            <person name="Chibana H."/>
            <person name="Nantel A."/>
            <person name="Magee P.T."/>
        </authorList>
    </citation>
    <scope>GENOME REANNOTATION</scope>
    <source>
        <strain>SC5314 / ATCC MYA-2876</strain>
    </source>
</reference>
<reference key="3">
    <citation type="journal article" date="2013" name="Genome Biol.">
        <title>Assembly of a phased diploid Candida albicans genome facilitates allele-specific measurements and provides a simple model for repeat and indel structure.</title>
        <authorList>
            <person name="Muzzey D."/>
            <person name="Schwartz K."/>
            <person name="Weissman J.S."/>
            <person name="Sherlock G."/>
        </authorList>
    </citation>
    <scope>NUCLEOTIDE SEQUENCE [LARGE SCALE GENOMIC DNA]</scope>
    <scope>GENOME REANNOTATION</scope>
    <source>
        <strain>SC5314 / ATCC MYA-2876</strain>
    </source>
</reference>
<reference key="4">
    <citation type="journal article" date="2001" name="EMBO J.">
        <title>NRG1 represses yeast-hypha morphogenesis and hypha-specific gene expression in Candida albicans.</title>
        <authorList>
            <person name="Murad A.M."/>
            <person name="Leng P."/>
            <person name="Straffon M."/>
            <person name="Wishart J."/>
            <person name="Macaskill S."/>
            <person name="MacCallum D."/>
            <person name="Schnell N."/>
            <person name="Talibi D."/>
            <person name="Marechal D."/>
            <person name="Tekaia F."/>
            <person name="d'Enfert C."/>
            <person name="Gaillardin C."/>
            <person name="Odds F.C."/>
            <person name="Brown A.J."/>
        </authorList>
    </citation>
    <scope>INDUCTION</scope>
</reference>
<reference key="5">
    <citation type="journal article" date="2001" name="Mol. Microbiol.">
        <title>Transcript profiling in Candida albicans reveals new cellular functions for the transcriptional repressors CaTup1, CaMig1 and CaNrg1.</title>
        <authorList>
            <person name="Murad A.M."/>
            <person name="d'Enfert C."/>
            <person name="Gaillardin C."/>
            <person name="Tournu H."/>
            <person name="Tekaia F."/>
            <person name="Talibi D."/>
            <person name="Marechal D."/>
            <person name="Marchais V."/>
            <person name="Cottin J."/>
            <person name="Brown A.J."/>
        </authorList>
    </citation>
    <scope>INDUCTION</scope>
</reference>
<reference key="6">
    <citation type="journal article" date="2003" name="Yeast">
        <title>An analysis of the Candida albicans genome database for soluble secreted proteins using computer-based prediction algorithms.</title>
        <authorList>
            <person name="Lee S.A."/>
            <person name="Wormsley S."/>
            <person name="Kamoun S."/>
            <person name="Lee A.F."/>
            <person name="Joiner K."/>
            <person name="Wong B."/>
        </authorList>
    </citation>
    <scope>PREDICTION OF GPI-ANCHOR</scope>
</reference>
<reference key="7">
    <citation type="journal article" date="2004" name="Mol. Microbiol.">
        <title>Transcriptional profiling in Candida albicans reveals new adaptive responses to extracellular pH and functions for Rim101p.</title>
        <authorList>
            <person name="Bensen E.S."/>
            <person name="Martin S.J."/>
            <person name="Li M."/>
            <person name="Berman J."/>
            <person name="Davis D.A."/>
        </authorList>
    </citation>
    <scope>INDUCTION</scope>
</reference>
<reference key="8">
    <citation type="journal article" date="2006" name="J. Biol. Chem.">
        <title>The CRH family coding for cell wall glycosylphosphatidylinositol proteins with a predicted transglycosidase domain affects cell wall organization and virulence of Candida albicans.</title>
        <authorList>
            <person name="Pardini G."/>
            <person name="De Groot P.W."/>
            <person name="Coste A.T."/>
            <person name="Karababa M."/>
            <person name="Klis F.M."/>
            <person name="de Koster C.G."/>
            <person name="Sanglard D."/>
        </authorList>
    </citation>
    <scope>DISRUPTION PHENOTYPE</scope>
    <scope>FUNCTION</scope>
</reference>
<reference key="9">
    <citation type="journal article" date="2006" name="Fungal Genet. Biol.">
        <title>Genomic response programs of Candida albicans following protoplasting and regeneration.</title>
        <authorList>
            <person name="Castillo L."/>
            <person name="Martinez A.I."/>
            <person name="Garcera A."/>
            <person name="Garcia-Martinez J."/>
            <person name="Ruiz-Herrera J."/>
            <person name="Valentin E."/>
            <person name="Sentandreu R."/>
        </authorList>
    </citation>
    <scope>IDENTIFICATION BY MASS SPECTROMETRY</scope>
    <scope>SUBCELLULAR LOCATION</scope>
    <scope>INDUCTION</scope>
</reference>